<protein>
    <recommendedName>
        <fullName evidence="1">UDP-N-acetylmuramate--L-alanine ligase</fullName>
        <ecNumber evidence="1">6.3.2.8</ecNumber>
    </recommendedName>
    <alternativeName>
        <fullName evidence="1">UDP-N-acetylmuramoyl-L-alanine synthetase</fullName>
    </alternativeName>
</protein>
<sequence length="470" mass="50111">MKLPSGLGSIHFVGIGGIGMSGIAEVLHNLGYEVQGSDVADSANVKRLRDLGIKVMIGHSAVNVDDADVVVVSSAIKRDNPELVAARTKRLPVVRRAEMLAELMRLKSCVSIAGTHGKTTTTSMVAALLDAGNFDPTVINGGIINAYGTNARLGDGNWMVVEADESDGTFLKLPTEVAIVTNVDPEHLDHFKTFDKVQDAFKTFVENVPFYGFAVMCIDHPVVQALVGRIEDRRVITYGENPQADVRLVDVDLKGGITRFGVVFRNRAGETVHEISGLKLPMPGKHNALNATAAIAVAHELKVPDDKIIEAIANFGGVKRRFTRTGEWNGVTVFDDYGHHPVEIAAVLKAARAASEGQVIAVVQPHRYSRLASLFDEFCTCFNDADHVVVAPVYAAGETPIEGADRDHLVQGLIAHGHRSVTALEGPERLAQVVGGLAKPGDYVICLGAGSISGWAYALPGELAALKPAA</sequence>
<dbReference type="EC" id="6.3.2.8" evidence="1"/>
<dbReference type="EMBL" id="CP000781">
    <property type="protein sequence ID" value="ABS66441.1"/>
    <property type="molecule type" value="Genomic_DNA"/>
</dbReference>
<dbReference type="SMR" id="A7IEJ8"/>
<dbReference type="STRING" id="78245.Xaut_1192"/>
<dbReference type="KEGG" id="xau:Xaut_1192"/>
<dbReference type="eggNOG" id="COG0773">
    <property type="taxonomic scope" value="Bacteria"/>
</dbReference>
<dbReference type="HOGENOM" id="CLU_028104_2_2_5"/>
<dbReference type="OrthoDB" id="9804126at2"/>
<dbReference type="PhylomeDB" id="A7IEJ8"/>
<dbReference type="UniPathway" id="UPA00219"/>
<dbReference type="Proteomes" id="UP000002417">
    <property type="component" value="Chromosome"/>
</dbReference>
<dbReference type="GO" id="GO:0005737">
    <property type="term" value="C:cytoplasm"/>
    <property type="evidence" value="ECO:0007669"/>
    <property type="project" value="UniProtKB-SubCell"/>
</dbReference>
<dbReference type="GO" id="GO:0005524">
    <property type="term" value="F:ATP binding"/>
    <property type="evidence" value="ECO:0007669"/>
    <property type="project" value="UniProtKB-UniRule"/>
</dbReference>
<dbReference type="GO" id="GO:0008763">
    <property type="term" value="F:UDP-N-acetylmuramate-L-alanine ligase activity"/>
    <property type="evidence" value="ECO:0007669"/>
    <property type="project" value="UniProtKB-UniRule"/>
</dbReference>
<dbReference type="GO" id="GO:0051301">
    <property type="term" value="P:cell division"/>
    <property type="evidence" value="ECO:0007669"/>
    <property type="project" value="UniProtKB-KW"/>
</dbReference>
<dbReference type="GO" id="GO:0071555">
    <property type="term" value="P:cell wall organization"/>
    <property type="evidence" value="ECO:0007669"/>
    <property type="project" value="UniProtKB-KW"/>
</dbReference>
<dbReference type="GO" id="GO:0009252">
    <property type="term" value="P:peptidoglycan biosynthetic process"/>
    <property type="evidence" value="ECO:0007669"/>
    <property type="project" value="UniProtKB-UniRule"/>
</dbReference>
<dbReference type="GO" id="GO:0008360">
    <property type="term" value="P:regulation of cell shape"/>
    <property type="evidence" value="ECO:0007669"/>
    <property type="project" value="UniProtKB-KW"/>
</dbReference>
<dbReference type="Gene3D" id="3.90.190.20">
    <property type="entry name" value="Mur ligase, C-terminal domain"/>
    <property type="match status" value="1"/>
</dbReference>
<dbReference type="Gene3D" id="3.40.1190.10">
    <property type="entry name" value="Mur-like, catalytic domain"/>
    <property type="match status" value="1"/>
</dbReference>
<dbReference type="Gene3D" id="3.40.50.720">
    <property type="entry name" value="NAD(P)-binding Rossmann-like Domain"/>
    <property type="match status" value="1"/>
</dbReference>
<dbReference type="HAMAP" id="MF_00046">
    <property type="entry name" value="MurC"/>
    <property type="match status" value="1"/>
</dbReference>
<dbReference type="InterPro" id="IPR036565">
    <property type="entry name" value="Mur-like_cat_sf"/>
</dbReference>
<dbReference type="InterPro" id="IPR004101">
    <property type="entry name" value="Mur_ligase_C"/>
</dbReference>
<dbReference type="InterPro" id="IPR036615">
    <property type="entry name" value="Mur_ligase_C_dom_sf"/>
</dbReference>
<dbReference type="InterPro" id="IPR013221">
    <property type="entry name" value="Mur_ligase_cen"/>
</dbReference>
<dbReference type="InterPro" id="IPR000713">
    <property type="entry name" value="Mur_ligase_N"/>
</dbReference>
<dbReference type="InterPro" id="IPR050061">
    <property type="entry name" value="MurCDEF_pg_biosynth"/>
</dbReference>
<dbReference type="InterPro" id="IPR005758">
    <property type="entry name" value="UDP-N-AcMur_Ala_ligase_MurC"/>
</dbReference>
<dbReference type="NCBIfam" id="TIGR01082">
    <property type="entry name" value="murC"/>
    <property type="match status" value="1"/>
</dbReference>
<dbReference type="PANTHER" id="PTHR43445:SF3">
    <property type="entry name" value="UDP-N-ACETYLMURAMATE--L-ALANINE LIGASE"/>
    <property type="match status" value="1"/>
</dbReference>
<dbReference type="PANTHER" id="PTHR43445">
    <property type="entry name" value="UDP-N-ACETYLMURAMATE--L-ALANINE LIGASE-RELATED"/>
    <property type="match status" value="1"/>
</dbReference>
<dbReference type="Pfam" id="PF01225">
    <property type="entry name" value="Mur_ligase"/>
    <property type="match status" value="1"/>
</dbReference>
<dbReference type="Pfam" id="PF02875">
    <property type="entry name" value="Mur_ligase_C"/>
    <property type="match status" value="1"/>
</dbReference>
<dbReference type="Pfam" id="PF08245">
    <property type="entry name" value="Mur_ligase_M"/>
    <property type="match status" value="1"/>
</dbReference>
<dbReference type="SUPFAM" id="SSF51984">
    <property type="entry name" value="MurCD N-terminal domain"/>
    <property type="match status" value="1"/>
</dbReference>
<dbReference type="SUPFAM" id="SSF53623">
    <property type="entry name" value="MurD-like peptide ligases, catalytic domain"/>
    <property type="match status" value="1"/>
</dbReference>
<dbReference type="SUPFAM" id="SSF53244">
    <property type="entry name" value="MurD-like peptide ligases, peptide-binding domain"/>
    <property type="match status" value="1"/>
</dbReference>
<comment type="function">
    <text evidence="1">Cell wall formation.</text>
</comment>
<comment type="catalytic activity">
    <reaction evidence="1">
        <text>UDP-N-acetyl-alpha-D-muramate + L-alanine + ATP = UDP-N-acetyl-alpha-D-muramoyl-L-alanine + ADP + phosphate + H(+)</text>
        <dbReference type="Rhea" id="RHEA:23372"/>
        <dbReference type="ChEBI" id="CHEBI:15378"/>
        <dbReference type="ChEBI" id="CHEBI:30616"/>
        <dbReference type="ChEBI" id="CHEBI:43474"/>
        <dbReference type="ChEBI" id="CHEBI:57972"/>
        <dbReference type="ChEBI" id="CHEBI:70757"/>
        <dbReference type="ChEBI" id="CHEBI:83898"/>
        <dbReference type="ChEBI" id="CHEBI:456216"/>
        <dbReference type="EC" id="6.3.2.8"/>
    </reaction>
</comment>
<comment type="pathway">
    <text evidence="1">Cell wall biogenesis; peptidoglycan biosynthesis.</text>
</comment>
<comment type="subcellular location">
    <subcellularLocation>
        <location evidence="1">Cytoplasm</location>
    </subcellularLocation>
</comment>
<comment type="similarity">
    <text evidence="1">Belongs to the MurCDEF family.</text>
</comment>
<gene>
    <name evidence="1" type="primary">murC</name>
    <name type="ordered locus">Xaut_1192</name>
</gene>
<feature type="chain" id="PRO_1000091151" description="UDP-N-acetylmuramate--L-alanine ligase">
    <location>
        <begin position="1"/>
        <end position="470"/>
    </location>
</feature>
<feature type="binding site" evidence="1">
    <location>
        <begin position="114"/>
        <end position="120"/>
    </location>
    <ligand>
        <name>ATP</name>
        <dbReference type="ChEBI" id="CHEBI:30616"/>
    </ligand>
</feature>
<evidence type="ECO:0000255" key="1">
    <source>
        <dbReference type="HAMAP-Rule" id="MF_00046"/>
    </source>
</evidence>
<name>MURC_XANP2</name>
<proteinExistence type="inferred from homology"/>
<organism>
    <name type="scientific">Xanthobacter autotrophicus (strain ATCC BAA-1158 / Py2)</name>
    <dbReference type="NCBI Taxonomy" id="78245"/>
    <lineage>
        <taxon>Bacteria</taxon>
        <taxon>Pseudomonadati</taxon>
        <taxon>Pseudomonadota</taxon>
        <taxon>Alphaproteobacteria</taxon>
        <taxon>Hyphomicrobiales</taxon>
        <taxon>Xanthobacteraceae</taxon>
        <taxon>Xanthobacter</taxon>
    </lineage>
</organism>
<keyword id="KW-0067">ATP-binding</keyword>
<keyword id="KW-0131">Cell cycle</keyword>
<keyword id="KW-0132">Cell division</keyword>
<keyword id="KW-0133">Cell shape</keyword>
<keyword id="KW-0961">Cell wall biogenesis/degradation</keyword>
<keyword id="KW-0963">Cytoplasm</keyword>
<keyword id="KW-0436">Ligase</keyword>
<keyword id="KW-0547">Nucleotide-binding</keyword>
<keyword id="KW-0573">Peptidoglycan synthesis</keyword>
<keyword id="KW-1185">Reference proteome</keyword>
<reference key="1">
    <citation type="submission" date="2007-07" db="EMBL/GenBank/DDBJ databases">
        <title>Complete sequence of chromosome of Xanthobacter autotrophicus Py2.</title>
        <authorList>
            <consortium name="US DOE Joint Genome Institute"/>
            <person name="Copeland A."/>
            <person name="Lucas S."/>
            <person name="Lapidus A."/>
            <person name="Barry K."/>
            <person name="Glavina del Rio T."/>
            <person name="Hammon N."/>
            <person name="Israni S."/>
            <person name="Dalin E."/>
            <person name="Tice H."/>
            <person name="Pitluck S."/>
            <person name="Sims D."/>
            <person name="Brettin T."/>
            <person name="Bruce D."/>
            <person name="Detter J.C."/>
            <person name="Han C."/>
            <person name="Tapia R."/>
            <person name="Brainard J."/>
            <person name="Schmutz J."/>
            <person name="Larimer F."/>
            <person name="Land M."/>
            <person name="Hauser L."/>
            <person name="Kyrpides N."/>
            <person name="Kim E."/>
            <person name="Ensigns S.A."/>
            <person name="Richardson P."/>
        </authorList>
    </citation>
    <scope>NUCLEOTIDE SEQUENCE [LARGE SCALE GENOMIC DNA]</scope>
    <source>
        <strain>ATCC BAA-1158 / Py2</strain>
    </source>
</reference>
<accession>A7IEJ8</accession>